<organism evidence="10">
    <name type="scientific">Caenorhabditis elegans</name>
    <dbReference type="NCBI Taxonomy" id="6239"/>
    <lineage>
        <taxon>Eukaryota</taxon>
        <taxon>Metazoa</taxon>
        <taxon>Ecdysozoa</taxon>
        <taxon>Nematoda</taxon>
        <taxon>Chromadorea</taxon>
        <taxon>Rhabditida</taxon>
        <taxon>Rhabditina</taxon>
        <taxon>Rhabditomorpha</taxon>
        <taxon>Rhabditoidea</taxon>
        <taxon>Rhabditidae</taxon>
        <taxon>Peloderinae</taxon>
        <taxon>Caenorhabditis</taxon>
    </lineage>
</organism>
<sequence>MSIPANTIQKDKMMHSDYYTQSQGPTVEQQPEWQASVQPYSDPHAYSPSFYMNMSQVPHFLPAQVDPFIYPNTLGSYGGDKQVQCLWETNGQVCMHVCQNSGELSTHISSNHITHDSKFVCLWKGCDREFKMFKAKYKLVNHMRVHTGERPFLCDVCNKVFARSENLKIHKRIHSGEKPFQCTHNGCTKLFANSSDRKKHMHVHSSHKPYSCMYPDCGKTYTHPSSLRKHTKVHENEKKSQLSPEHDESSDSGNASIGTPTTDESLTFSPENIKRDQHLHTMHTFMDRPNPFMQMYQNQFSNPTYHMFMAKPDSY</sequence>
<comment type="function">
    <text evidence="3 4 5 6">Transcription factor (PubMed:26073017). Modulates expression of target genes by binding to regulatory elements (PubMed:26073017). Required for normal cell division timing and cell positioning in anterior lineages, acting in a cell-autonomous manner (PubMed:35660370). Required for development, fusion and fate of cells of the ventral epidermis, the Pn.p cells, during larval development; acts in concert with homeobox genes lin-39 and mab-5 (PubMed:12091304). Required for the specification of the AIY interneuron (PubMed:19386265). In complex with TCF transcription factor pop-1, positively modulates expression of LIM/homeobox protein ttx-3 in anterior daughter cells of the SMDD/AIY neuron lineage (PubMed:19386265, PubMed:26073017).</text>
</comment>
<comment type="subunit">
    <text evidence="5">Interacts with TCF transcription factor pop-1; the interaction is direct and facilitates transcriptional activation; transcription may be repressed by beta-catenin/sys-1.</text>
</comment>
<comment type="subcellular location">
    <subcellularLocation>
        <location evidence="3 4 6">Nucleus</location>
    </subcellularLocation>
    <subcellularLocation>
        <location evidence="4">Cytoplasm</location>
    </subcellularLocation>
    <text evidence="4">Localized to nucleus during interphase in cells giving rise to SMDD/AIY neurons, then in cytoplasm just before cell cleavage.</text>
</comment>
<comment type="alternative products">
    <event type="alternative splicing"/>
    <isoform>
        <id>Q7JNM3-1</id>
        <name evidence="12">1</name>
        <sequence type="displayed"/>
    </isoform>
    <isoform>
        <id>Q7JNM3-2</id>
        <name evidence="11">a</name>
        <sequence type="described" ref="VSP_061768"/>
    </isoform>
</comment>
<comment type="developmental stage">
    <text evidence="3 4 5 6">Expressed in the P cell lineage in hermaphrodites during the larval L1 stage (at protein level) (PubMed:12091304, PubMed:19386265). Expressed weakly in all 12 P cells just before P-cell migration, as migration occurs and in both P cell daughters after division in the ventral cord (at protein level) (PubMed:12091304). After division, expression decreases drastically in the Pn.a cell lineage; it continues in the Pn.p cells, and subsequently decreases at different rates in different Pn.p cells (at protein level) (PubMed:12091304). Also expressed in the B and Y cells in the tail region during L1 (PubMed:12091304, PubMed:19386265). Expressed in the early embryo in all MS descendants and in several related anterior sublineages of ABa that arise at the 50-cell stage (PubMed:35660370). In later embryos, expression occurs in two anterior sublineages of MS, in several anterior ABp-derived sublineages, and in the Pn ventral epidermal blast cells (PubMed:35660370). Expressed in many dividing cells in the embryo; at the end of gastrulation, expressed in some neuroblasts on the ventral side (PubMed:19386265). Expressed in the embryo at epidermal closure, at similar levels, in the daughters of the ABpl/rpapaa neuroblast, the anterior SMDD/AIY neuroblast, and the posterior SIAD/SIBV neuroblast (PubMed:19386265, PubMed:26073017). Expression in the AIY/SMDD lineage is transient and is lost during larval and adult stages (PubMed:19386265).</text>
</comment>
<comment type="disruption phenotype">
    <text evidence="3">RNAi-mediated knockdown causes many hermaphrodite progeny to be vulval-less and so unable to lay eggs (PubMed:12091304). Few or none of the Pn.p cells remain unfused in hermaphrodites or males (PubMed:12091304). In some conditions, despite being present in their normal position at hatching, P cells fail to migrate into the ventral cord during the larval L1 stage (PubMed:12091304).</text>
</comment>
<comment type="sequence caution" evidence="8">
    <conflict type="erroneous initiation">
        <sequence resource="EMBL-CDS" id="AAM55473"/>
    </conflict>
    <text>Truncated N-terminus.</text>
</comment>
<name>ZICH2_CAEEL</name>
<proteinExistence type="evidence at protein level"/>
<protein>
    <recommendedName>
        <fullName evidence="7">Zinc finger transcription factor ref-2</fullName>
    </recommendedName>
    <alternativeName>
        <fullName evidence="12">Regulator of fusion 2</fullName>
    </alternativeName>
    <alternativeName>
        <fullName evidence="7">Zic transcription factor ref-2</fullName>
    </alternativeName>
</protein>
<feature type="chain" id="PRO_0000457325" description="Zinc finger transcription factor ref-2">
    <location>
        <begin position="1"/>
        <end position="315"/>
    </location>
</feature>
<feature type="zinc finger region" description="C2H2-type 1; atypical" evidence="1">
    <location>
        <begin position="83"/>
        <end position="112"/>
    </location>
</feature>
<feature type="zinc finger region" description="C2H2-type 2; degenerate" evidence="1">
    <location>
        <begin position="124"/>
        <end position="146"/>
    </location>
</feature>
<feature type="zinc finger region" description="C2H2-type 3" evidence="1">
    <location>
        <begin position="152"/>
        <end position="174"/>
    </location>
</feature>
<feature type="zinc finger region" description="C2H2-type 4" evidence="1">
    <location>
        <begin position="180"/>
        <end position="204"/>
    </location>
</feature>
<feature type="zinc finger region" description="C2H2-type 5" evidence="1">
    <location>
        <begin position="210"/>
        <end position="234"/>
    </location>
</feature>
<feature type="region of interest" description="Disordered" evidence="2">
    <location>
        <begin position="225"/>
        <end position="270"/>
    </location>
</feature>
<feature type="compositionally biased region" description="Basic and acidic residues" evidence="2">
    <location>
        <begin position="233"/>
        <end position="249"/>
    </location>
</feature>
<feature type="compositionally biased region" description="Polar residues" evidence="2">
    <location>
        <begin position="251"/>
        <end position="270"/>
    </location>
</feature>
<feature type="splice variant" id="VSP_061768" description="In isoform a." evidence="8">
    <location>
        <begin position="1"/>
        <end position="13"/>
    </location>
</feature>
<feature type="mutagenesis site" description="In ot327; larval lethality. Abolishes expression of homeobox genes ttx-3 and ceh-10 in the AIY/SMDD lineage in the embryo, and also in the AIY interneuron at larval stages." evidence="4 5">
    <original>C</original>
    <variation>Y</variation>
    <location>
        <position position="187"/>
    </location>
</feature>
<evidence type="ECO:0000255" key="1">
    <source>
        <dbReference type="PROSITE-ProRule" id="PRU00042"/>
    </source>
</evidence>
<evidence type="ECO:0000256" key="2">
    <source>
        <dbReference type="SAM" id="MobiDB-lite"/>
    </source>
</evidence>
<evidence type="ECO:0000269" key="3">
    <source>
    </source>
</evidence>
<evidence type="ECO:0000269" key="4">
    <source>
    </source>
</evidence>
<evidence type="ECO:0000269" key="5">
    <source>
    </source>
</evidence>
<evidence type="ECO:0000269" key="6">
    <source>
    </source>
</evidence>
<evidence type="ECO:0000303" key="7">
    <source>
    </source>
</evidence>
<evidence type="ECO:0000305" key="8"/>
<evidence type="ECO:0000312" key="9">
    <source>
        <dbReference type="EMBL" id="AAM55473.1"/>
    </source>
</evidence>
<evidence type="ECO:0000312" key="10">
    <source>
        <dbReference type="Proteomes" id="UP000001940"/>
    </source>
</evidence>
<evidence type="ECO:0000312" key="11">
    <source>
        <dbReference type="WormBase" id="C47C12.3a"/>
    </source>
</evidence>
<evidence type="ECO:0000312" key="12">
    <source>
        <dbReference type="WormBase" id="C47C12.3b"/>
    </source>
</evidence>
<dbReference type="EMBL" id="AY115477">
    <property type="protein sequence ID" value="AAM55473.1"/>
    <property type="status" value="ALT_INIT"/>
    <property type="molecule type" value="mRNA"/>
</dbReference>
<dbReference type="EMBL" id="BX284606">
    <property type="protein sequence ID" value="CCD67553.1"/>
    <property type="molecule type" value="Genomic_DNA"/>
</dbReference>
<dbReference type="EMBL" id="BX284606">
    <property type="protein sequence ID" value="CCD67554.1"/>
    <property type="molecule type" value="Genomic_DNA"/>
</dbReference>
<dbReference type="PIR" id="T25648">
    <property type="entry name" value="T25648"/>
</dbReference>
<dbReference type="RefSeq" id="NP_001024477.1">
    <molecule id="Q7JNM3-2"/>
    <property type="nucleotide sequence ID" value="NM_001029306.4"/>
</dbReference>
<dbReference type="RefSeq" id="NP_001024478.1">
    <molecule id="Q7JNM3-1"/>
    <property type="nucleotide sequence ID" value="NM_001029307.5"/>
</dbReference>
<dbReference type="SMR" id="Q7JNM3"/>
<dbReference type="FunCoup" id="Q7JNM3">
    <property type="interactions" value="436"/>
</dbReference>
<dbReference type="IntAct" id="Q7JNM3">
    <property type="interactions" value="4"/>
</dbReference>
<dbReference type="STRING" id="6239.C47C12.3b.1"/>
<dbReference type="PaxDb" id="6239-C47C12.3b"/>
<dbReference type="EnsemblMetazoa" id="C47C12.3a.1">
    <molecule id="Q7JNM3-2"/>
    <property type="protein sequence ID" value="C47C12.3a.1"/>
    <property type="gene ID" value="WBGene00004335"/>
</dbReference>
<dbReference type="EnsemblMetazoa" id="C47C12.3b.1">
    <molecule id="Q7JNM3-1"/>
    <property type="protein sequence ID" value="C47C12.3b.1"/>
    <property type="gene ID" value="WBGene00004335"/>
</dbReference>
<dbReference type="GeneID" id="183539"/>
<dbReference type="KEGG" id="cel:CELE_C47C12.3"/>
<dbReference type="UCSC" id="C47C12.3b">
    <property type="organism name" value="c. elegans"/>
</dbReference>
<dbReference type="AGR" id="WB:WBGene00004335"/>
<dbReference type="CTD" id="183539"/>
<dbReference type="WormBase" id="C47C12.3a">
    <molecule id="Q7JNM3-2"/>
    <property type="protein sequence ID" value="CE33037"/>
    <property type="gene ID" value="WBGene00004335"/>
    <property type="gene designation" value="ref-2"/>
</dbReference>
<dbReference type="WormBase" id="C47C12.3b">
    <molecule id="Q7JNM3-1"/>
    <property type="protein sequence ID" value="CE35437"/>
    <property type="gene ID" value="WBGene00004335"/>
    <property type="gene designation" value="ref-2"/>
</dbReference>
<dbReference type="eggNOG" id="KOG1721">
    <property type="taxonomic scope" value="Eukaryota"/>
</dbReference>
<dbReference type="GeneTree" id="ENSGT00940000165216"/>
<dbReference type="HOGENOM" id="CLU_925128_0_0_1"/>
<dbReference type="InParanoid" id="Q7JNM3"/>
<dbReference type="OMA" id="CLWETNG"/>
<dbReference type="OrthoDB" id="5968217at2759"/>
<dbReference type="PhylomeDB" id="Q7JNM3"/>
<dbReference type="PRO" id="PR:Q7JNM3"/>
<dbReference type="Proteomes" id="UP000001940">
    <property type="component" value="Chromosome X"/>
</dbReference>
<dbReference type="Bgee" id="WBGene00004335">
    <property type="expression patterns" value="Expressed in embryo and 3 other cell types or tissues"/>
</dbReference>
<dbReference type="ExpressionAtlas" id="Q7JNM3">
    <property type="expression patterns" value="baseline and differential"/>
</dbReference>
<dbReference type="GO" id="GO:0005737">
    <property type="term" value="C:cytoplasm"/>
    <property type="evidence" value="ECO:0007669"/>
    <property type="project" value="UniProtKB-SubCell"/>
</dbReference>
<dbReference type="GO" id="GO:0005634">
    <property type="term" value="C:nucleus"/>
    <property type="evidence" value="ECO:0000314"/>
    <property type="project" value="WormBase"/>
</dbReference>
<dbReference type="GO" id="GO:0000981">
    <property type="term" value="F:DNA-binding transcription factor activity, RNA polymerase II-specific"/>
    <property type="evidence" value="ECO:0000318"/>
    <property type="project" value="GO_Central"/>
</dbReference>
<dbReference type="GO" id="GO:0000978">
    <property type="term" value="F:RNA polymerase II cis-regulatory region sequence-specific DNA binding"/>
    <property type="evidence" value="ECO:0000318"/>
    <property type="project" value="GO_Central"/>
</dbReference>
<dbReference type="GO" id="GO:0000977">
    <property type="term" value="F:RNA polymerase II transcription regulatory region sequence-specific DNA binding"/>
    <property type="evidence" value="ECO:0000314"/>
    <property type="project" value="WormBase"/>
</dbReference>
<dbReference type="GO" id="GO:0061629">
    <property type="term" value="F:RNA polymerase II-specific DNA-binding transcription factor binding"/>
    <property type="evidence" value="ECO:0000353"/>
    <property type="project" value="WormBase"/>
</dbReference>
<dbReference type="GO" id="GO:0008270">
    <property type="term" value="F:zinc ion binding"/>
    <property type="evidence" value="ECO:0007669"/>
    <property type="project" value="UniProtKB-KW"/>
</dbReference>
<dbReference type="GO" id="GO:0009952">
    <property type="term" value="P:anterior/posterior pattern specification"/>
    <property type="evidence" value="ECO:0000315"/>
    <property type="project" value="UniProtKB"/>
</dbReference>
<dbReference type="GO" id="GO:0007417">
    <property type="term" value="P:central nervous system development"/>
    <property type="evidence" value="ECO:0000318"/>
    <property type="project" value="GO_Central"/>
</dbReference>
<dbReference type="GO" id="GO:0000122">
    <property type="term" value="P:negative regulation of transcription by RNA polymerase II"/>
    <property type="evidence" value="ECO:0000318"/>
    <property type="project" value="GO_Central"/>
</dbReference>
<dbReference type="GO" id="GO:0002119">
    <property type="term" value="P:nematode larval development"/>
    <property type="evidence" value="ECO:0000315"/>
    <property type="project" value="WormBase"/>
</dbReference>
<dbReference type="GO" id="GO:0048665">
    <property type="term" value="P:neuron fate specification"/>
    <property type="evidence" value="ECO:0000315"/>
    <property type="project" value="WormBase"/>
</dbReference>
<dbReference type="GO" id="GO:0045944">
    <property type="term" value="P:positive regulation of transcription by RNA polymerase II"/>
    <property type="evidence" value="ECO:0000315"/>
    <property type="project" value="WormBase"/>
</dbReference>
<dbReference type="GO" id="GO:0051302">
    <property type="term" value="P:regulation of cell division"/>
    <property type="evidence" value="ECO:0000315"/>
    <property type="project" value="UniProtKB"/>
</dbReference>
<dbReference type="FunFam" id="3.30.160.60:FF:000031">
    <property type="entry name" value="GLI family zinc finger 3"/>
    <property type="match status" value="1"/>
</dbReference>
<dbReference type="FunFam" id="3.30.160.60:FF:001102">
    <property type="entry name" value="Transcription factor IIIA"/>
    <property type="match status" value="1"/>
</dbReference>
<dbReference type="FunFam" id="3.30.160.60:FF:003201">
    <property type="entry name" value="Zinc finger protein 212"/>
    <property type="match status" value="1"/>
</dbReference>
<dbReference type="Gene3D" id="3.30.160.60">
    <property type="entry name" value="Classic Zinc Finger"/>
    <property type="match status" value="4"/>
</dbReference>
<dbReference type="InterPro" id="IPR043359">
    <property type="entry name" value="GLI-like"/>
</dbReference>
<dbReference type="InterPro" id="IPR056436">
    <property type="entry name" value="Znf-C2H2_ZIC1-5/GLI1-3-like"/>
</dbReference>
<dbReference type="InterPro" id="IPR036236">
    <property type="entry name" value="Znf_C2H2_sf"/>
</dbReference>
<dbReference type="InterPro" id="IPR013087">
    <property type="entry name" value="Znf_C2H2_type"/>
</dbReference>
<dbReference type="PANTHER" id="PTHR45718">
    <property type="entry name" value="TRANSCRIPTIONAL ACTIVATOR CUBITUS INTERRUPTUS"/>
    <property type="match status" value="1"/>
</dbReference>
<dbReference type="PANTHER" id="PTHR45718:SF4">
    <property type="entry name" value="TRANSCRIPTIONAL ACTIVATOR CUBITUS INTERRUPTUS"/>
    <property type="match status" value="1"/>
</dbReference>
<dbReference type="Pfam" id="PF00096">
    <property type="entry name" value="zf-C2H2"/>
    <property type="match status" value="2"/>
</dbReference>
<dbReference type="Pfam" id="PF23561">
    <property type="entry name" value="zf-C2H2_15"/>
    <property type="match status" value="1"/>
</dbReference>
<dbReference type="SMART" id="SM00355">
    <property type="entry name" value="ZnF_C2H2"/>
    <property type="match status" value="4"/>
</dbReference>
<dbReference type="SUPFAM" id="SSF57667">
    <property type="entry name" value="beta-beta-alpha zinc fingers"/>
    <property type="match status" value="2"/>
</dbReference>
<dbReference type="PROSITE" id="PS00028">
    <property type="entry name" value="ZINC_FINGER_C2H2_1"/>
    <property type="match status" value="3"/>
</dbReference>
<dbReference type="PROSITE" id="PS50157">
    <property type="entry name" value="ZINC_FINGER_C2H2_2"/>
    <property type="match status" value="4"/>
</dbReference>
<gene>
    <name evidence="12" type="primary">ref-2</name>
    <name evidence="12" type="ORF">C47C12.3</name>
</gene>
<accession>Q7JNM3</accession>
<accession>Q8MTC7</accession>
<accession>Q94178</accession>
<keyword id="KW-0025">Alternative splicing</keyword>
<keyword id="KW-0963">Cytoplasm</keyword>
<keyword id="KW-0479">Metal-binding</keyword>
<keyword id="KW-0539">Nucleus</keyword>
<keyword id="KW-1185">Reference proteome</keyword>
<keyword id="KW-0677">Repeat</keyword>
<keyword id="KW-0862">Zinc</keyword>
<keyword id="KW-0863">Zinc-finger</keyword>
<reference evidence="9" key="1">
    <citation type="journal article" date="2002" name="Development">
        <title>The zinc finger protein REF-2 functions with the Hox genes to inhibit cell fusion in the ventral epidermis of C. elegans.</title>
        <authorList>
            <person name="Alper S."/>
            <person name="Kenyon C."/>
        </authorList>
    </citation>
    <scope>NUCLEOTIDE SEQUENCE [MRNA]</scope>
    <scope>FUNCTION</scope>
    <scope>SUBCELLULAR LOCATION</scope>
    <scope>DISRUPTION PHENOTYPE</scope>
</reference>
<reference evidence="10" key="2">
    <citation type="journal article" date="1998" name="Science">
        <title>Genome sequence of the nematode C. elegans: a platform for investigating biology.</title>
        <authorList>
            <consortium name="The C. elegans sequencing consortium"/>
        </authorList>
    </citation>
    <scope>NUCLEOTIDE SEQUENCE [LARGE SCALE GENOMIC DNA]</scope>
    <source>
        <strain evidence="10">Bristol N2</strain>
    </source>
</reference>
<reference evidence="8" key="3">
    <citation type="journal article" date="2009" name="Dev. Cell">
        <title>Linking asymmetric cell division to the terminal differentiation program of postmitotic neurons in C. elegans.</title>
        <authorList>
            <person name="Bertrand V."/>
            <person name="Hobert O."/>
        </authorList>
    </citation>
    <scope>FUNCTION</scope>
    <scope>SUBCELLULAR LOCATION</scope>
    <scope>DEVELOPMENTAL STAGE</scope>
    <scope>MUTAGENESIS OF CYS-187</scope>
</reference>
<reference evidence="8" key="4">
    <citation type="journal article" date="2015" name="Dev. Cell">
        <title>Atypical Transcriptional Activation by TCF via a Zic Transcription Factor in C. elegans Neuronal Precursors.</title>
        <authorList>
            <person name="Murgan S."/>
            <person name="Kari W."/>
            <person name="Rothbaecher U."/>
            <person name="Iche-Torres M."/>
            <person name="Melenec P."/>
            <person name="Hobert O."/>
            <person name="Bertrand V."/>
        </authorList>
    </citation>
    <scope>FUNCTION</scope>
    <scope>INTERACTION WITH POP-1</scope>
    <scope>DEVELOPMENTAL STAGE</scope>
    <scope>MUTAGENESIS OF CYS-187</scope>
</reference>
<reference evidence="8" key="5">
    <citation type="journal article" date="2022" name="Dev. Biol.">
        <title>pop-1/TCF, ref-2/ZIC and T-box factors regulate the development of anterior cells in the C. elegans embryo.</title>
        <authorList>
            <person name="Rumley J.D."/>
            <person name="Preston E.A."/>
            <person name="Cook D."/>
            <person name="Peng F.L."/>
            <person name="Zacharias A.L."/>
            <person name="Wu L."/>
            <person name="Jileaeva I."/>
            <person name="Murray J.I."/>
        </authorList>
    </citation>
    <scope>FUNCTION</scope>
    <scope>SUBCELLULAR LOCATION</scope>
    <scope>DEVELOPMENTAL STAGE</scope>
</reference>